<reference key="1">
    <citation type="submission" date="2007-10" db="EMBL/GenBank/DDBJ databases">
        <title>Complete sequence of chromosome 1 of Burkholderia multivorans ATCC 17616.</title>
        <authorList>
            <person name="Copeland A."/>
            <person name="Lucas S."/>
            <person name="Lapidus A."/>
            <person name="Barry K."/>
            <person name="Glavina del Rio T."/>
            <person name="Dalin E."/>
            <person name="Tice H."/>
            <person name="Pitluck S."/>
            <person name="Chain P."/>
            <person name="Malfatti S."/>
            <person name="Shin M."/>
            <person name="Vergez L."/>
            <person name="Schmutz J."/>
            <person name="Larimer F."/>
            <person name="Land M."/>
            <person name="Hauser L."/>
            <person name="Kyrpides N."/>
            <person name="Kim E."/>
            <person name="Tiedje J."/>
            <person name="Richardson P."/>
        </authorList>
    </citation>
    <scope>NUCLEOTIDE SEQUENCE [LARGE SCALE GENOMIC DNA]</scope>
    <source>
        <strain>ATCC 17616 / 249</strain>
    </source>
</reference>
<reference key="2">
    <citation type="submission" date="2007-04" db="EMBL/GenBank/DDBJ databases">
        <title>Complete genome sequence of Burkholderia multivorans ATCC 17616.</title>
        <authorList>
            <person name="Ohtsubo Y."/>
            <person name="Yamashita A."/>
            <person name="Kurokawa K."/>
            <person name="Takami H."/>
            <person name="Yuhara S."/>
            <person name="Nishiyama E."/>
            <person name="Endo R."/>
            <person name="Miyazaki R."/>
            <person name="Ono A."/>
            <person name="Yano K."/>
            <person name="Ito M."/>
            <person name="Sota M."/>
            <person name="Yuji N."/>
            <person name="Hattori M."/>
            <person name="Tsuda M."/>
        </authorList>
    </citation>
    <scope>NUCLEOTIDE SEQUENCE [LARGE SCALE GENOMIC DNA]</scope>
    <source>
        <strain>ATCC 17616 / 249</strain>
    </source>
</reference>
<sequence>MFGDRQRPMVLVLGLGESGLAIARWCARHGCRLRIADTREAPPNLAALRAEGIDAEFVGGPFGPALLDGGVEIVGLSPGLSPLEPALATLLAAANERGVAVWGELEFFAQALRALGTSGYQPKVLAITGTNGKTTTTSLTGLLCQRAGKKVAVAGNISPAMLDRLAAAIDDTALPDVWVLELSSFQLETARTFAPDAAAILNITQDHLDWHGSFDAYAAAKGRIFGATTTRVLNRDDPVVMKFAPAAGAADAPRTITFGLNEPTQDGDYGLSRDNGIAWLVEAIDRDAPDETAPTTRRRKRDAHTPDIAHKRLMPADALRIRGLHNAANALAAFALARAIDLPAAPLLHALREYRGEAHRVEVIATIDDVDYVDDSKGTNVGATVAALDGLAQKTVLIAGGDGKGQDFAPLVAPVARWCRAVMLIGRDAPAIRDTLAETGVPLVEHPTLEAAVHAAAALAEPGDAVLLSPACASLDMFRNYAHRADVFRAAVDELAIDKGATP</sequence>
<name>MURD_BURM1</name>
<feature type="chain" id="PRO_1000130834" description="UDP-N-acetylmuramoylalanine--D-glutamate ligase">
    <location>
        <begin position="1"/>
        <end position="503"/>
    </location>
</feature>
<feature type="binding site" evidence="1">
    <location>
        <begin position="129"/>
        <end position="135"/>
    </location>
    <ligand>
        <name>ATP</name>
        <dbReference type="ChEBI" id="CHEBI:30616"/>
    </ligand>
</feature>
<evidence type="ECO:0000255" key="1">
    <source>
        <dbReference type="HAMAP-Rule" id="MF_00639"/>
    </source>
</evidence>
<protein>
    <recommendedName>
        <fullName evidence="1">UDP-N-acetylmuramoylalanine--D-glutamate ligase</fullName>
        <ecNumber evidence="1">6.3.2.9</ecNumber>
    </recommendedName>
    <alternativeName>
        <fullName evidence="1">D-glutamic acid-adding enzyme</fullName>
    </alternativeName>
    <alternativeName>
        <fullName evidence="1">UDP-N-acetylmuramoyl-L-alanyl-D-glutamate synthetase</fullName>
    </alternativeName>
</protein>
<comment type="function">
    <text evidence="1">Cell wall formation. Catalyzes the addition of glutamate to the nucleotide precursor UDP-N-acetylmuramoyl-L-alanine (UMA).</text>
</comment>
<comment type="catalytic activity">
    <reaction evidence="1">
        <text>UDP-N-acetyl-alpha-D-muramoyl-L-alanine + D-glutamate + ATP = UDP-N-acetyl-alpha-D-muramoyl-L-alanyl-D-glutamate + ADP + phosphate + H(+)</text>
        <dbReference type="Rhea" id="RHEA:16429"/>
        <dbReference type="ChEBI" id="CHEBI:15378"/>
        <dbReference type="ChEBI" id="CHEBI:29986"/>
        <dbReference type="ChEBI" id="CHEBI:30616"/>
        <dbReference type="ChEBI" id="CHEBI:43474"/>
        <dbReference type="ChEBI" id="CHEBI:83898"/>
        <dbReference type="ChEBI" id="CHEBI:83900"/>
        <dbReference type="ChEBI" id="CHEBI:456216"/>
        <dbReference type="EC" id="6.3.2.9"/>
    </reaction>
</comment>
<comment type="pathway">
    <text evidence="1">Cell wall biogenesis; peptidoglycan biosynthesis.</text>
</comment>
<comment type="subcellular location">
    <subcellularLocation>
        <location evidence="1">Cytoplasm</location>
    </subcellularLocation>
</comment>
<comment type="similarity">
    <text evidence="1">Belongs to the MurCDEF family.</text>
</comment>
<organism>
    <name type="scientific">Burkholderia multivorans (strain ATCC 17616 / 249)</name>
    <dbReference type="NCBI Taxonomy" id="395019"/>
    <lineage>
        <taxon>Bacteria</taxon>
        <taxon>Pseudomonadati</taxon>
        <taxon>Pseudomonadota</taxon>
        <taxon>Betaproteobacteria</taxon>
        <taxon>Burkholderiales</taxon>
        <taxon>Burkholderiaceae</taxon>
        <taxon>Burkholderia</taxon>
        <taxon>Burkholderia cepacia complex</taxon>
    </lineage>
</organism>
<dbReference type="EC" id="6.3.2.9" evidence="1"/>
<dbReference type="EMBL" id="CP000868">
    <property type="protein sequence ID" value="ABX16522.1"/>
    <property type="molecule type" value="Genomic_DNA"/>
</dbReference>
<dbReference type="EMBL" id="AP009385">
    <property type="protein sequence ID" value="BAG42368.1"/>
    <property type="molecule type" value="Genomic_DNA"/>
</dbReference>
<dbReference type="RefSeq" id="WP_012214187.1">
    <property type="nucleotide sequence ID" value="NC_010084.1"/>
</dbReference>
<dbReference type="SMR" id="A9AJ18"/>
<dbReference type="STRING" id="395019.BMULJ_00400"/>
<dbReference type="KEGG" id="bmj:BMULJ_00400"/>
<dbReference type="KEGG" id="bmu:Bmul_2838"/>
<dbReference type="eggNOG" id="COG0771">
    <property type="taxonomic scope" value="Bacteria"/>
</dbReference>
<dbReference type="HOGENOM" id="CLU_032540_1_1_4"/>
<dbReference type="UniPathway" id="UPA00219"/>
<dbReference type="Proteomes" id="UP000008815">
    <property type="component" value="Chromosome 1"/>
</dbReference>
<dbReference type="GO" id="GO:0005737">
    <property type="term" value="C:cytoplasm"/>
    <property type="evidence" value="ECO:0007669"/>
    <property type="project" value="UniProtKB-SubCell"/>
</dbReference>
<dbReference type="GO" id="GO:0005524">
    <property type="term" value="F:ATP binding"/>
    <property type="evidence" value="ECO:0007669"/>
    <property type="project" value="UniProtKB-UniRule"/>
</dbReference>
<dbReference type="GO" id="GO:0008764">
    <property type="term" value="F:UDP-N-acetylmuramoylalanine-D-glutamate ligase activity"/>
    <property type="evidence" value="ECO:0007669"/>
    <property type="project" value="UniProtKB-UniRule"/>
</dbReference>
<dbReference type="GO" id="GO:0051301">
    <property type="term" value="P:cell division"/>
    <property type="evidence" value="ECO:0007669"/>
    <property type="project" value="UniProtKB-KW"/>
</dbReference>
<dbReference type="GO" id="GO:0071555">
    <property type="term" value="P:cell wall organization"/>
    <property type="evidence" value="ECO:0007669"/>
    <property type="project" value="UniProtKB-KW"/>
</dbReference>
<dbReference type="GO" id="GO:0009252">
    <property type="term" value="P:peptidoglycan biosynthetic process"/>
    <property type="evidence" value="ECO:0007669"/>
    <property type="project" value="UniProtKB-UniRule"/>
</dbReference>
<dbReference type="GO" id="GO:0008360">
    <property type="term" value="P:regulation of cell shape"/>
    <property type="evidence" value="ECO:0007669"/>
    <property type="project" value="UniProtKB-KW"/>
</dbReference>
<dbReference type="Gene3D" id="3.90.190.20">
    <property type="entry name" value="Mur ligase, C-terminal domain"/>
    <property type="match status" value="1"/>
</dbReference>
<dbReference type="Gene3D" id="3.40.1190.10">
    <property type="entry name" value="Mur-like, catalytic domain"/>
    <property type="match status" value="1"/>
</dbReference>
<dbReference type="Gene3D" id="3.40.50.720">
    <property type="entry name" value="NAD(P)-binding Rossmann-like Domain"/>
    <property type="match status" value="1"/>
</dbReference>
<dbReference type="HAMAP" id="MF_00639">
    <property type="entry name" value="MurD"/>
    <property type="match status" value="1"/>
</dbReference>
<dbReference type="InterPro" id="IPR036565">
    <property type="entry name" value="Mur-like_cat_sf"/>
</dbReference>
<dbReference type="InterPro" id="IPR004101">
    <property type="entry name" value="Mur_ligase_C"/>
</dbReference>
<dbReference type="InterPro" id="IPR036615">
    <property type="entry name" value="Mur_ligase_C_dom_sf"/>
</dbReference>
<dbReference type="InterPro" id="IPR013221">
    <property type="entry name" value="Mur_ligase_cen"/>
</dbReference>
<dbReference type="InterPro" id="IPR005762">
    <property type="entry name" value="MurD"/>
</dbReference>
<dbReference type="NCBIfam" id="TIGR01087">
    <property type="entry name" value="murD"/>
    <property type="match status" value="1"/>
</dbReference>
<dbReference type="PANTHER" id="PTHR43692">
    <property type="entry name" value="UDP-N-ACETYLMURAMOYLALANINE--D-GLUTAMATE LIGASE"/>
    <property type="match status" value="1"/>
</dbReference>
<dbReference type="PANTHER" id="PTHR43692:SF1">
    <property type="entry name" value="UDP-N-ACETYLMURAMOYLALANINE--D-GLUTAMATE LIGASE"/>
    <property type="match status" value="1"/>
</dbReference>
<dbReference type="Pfam" id="PF02875">
    <property type="entry name" value="Mur_ligase_C"/>
    <property type="match status" value="1"/>
</dbReference>
<dbReference type="Pfam" id="PF08245">
    <property type="entry name" value="Mur_ligase_M"/>
    <property type="match status" value="1"/>
</dbReference>
<dbReference type="Pfam" id="PF21799">
    <property type="entry name" value="MurD-like_N"/>
    <property type="match status" value="1"/>
</dbReference>
<dbReference type="SUPFAM" id="SSF51984">
    <property type="entry name" value="MurCD N-terminal domain"/>
    <property type="match status" value="1"/>
</dbReference>
<dbReference type="SUPFAM" id="SSF53623">
    <property type="entry name" value="MurD-like peptide ligases, catalytic domain"/>
    <property type="match status" value="1"/>
</dbReference>
<dbReference type="SUPFAM" id="SSF53244">
    <property type="entry name" value="MurD-like peptide ligases, peptide-binding domain"/>
    <property type="match status" value="1"/>
</dbReference>
<proteinExistence type="inferred from homology"/>
<keyword id="KW-0067">ATP-binding</keyword>
<keyword id="KW-0131">Cell cycle</keyword>
<keyword id="KW-0132">Cell division</keyword>
<keyword id="KW-0133">Cell shape</keyword>
<keyword id="KW-0961">Cell wall biogenesis/degradation</keyword>
<keyword id="KW-0963">Cytoplasm</keyword>
<keyword id="KW-0436">Ligase</keyword>
<keyword id="KW-0547">Nucleotide-binding</keyword>
<keyword id="KW-0573">Peptidoglycan synthesis</keyword>
<keyword id="KW-1185">Reference proteome</keyword>
<accession>A9AJ18</accession>
<gene>
    <name evidence="1" type="primary">murD</name>
    <name type="ordered locus">Bmul_2838</name>
    <name type="ordered locus">BMULJ_00400</name>
</gene>